<protein>
    <recommendedName>
        <fullName evidence="1">Phosphomethylpyrimidine synthase</fullName>
        <ecNumber evidence="1">4.1.99.17</ecNumber>
    </recommendedName>
    <alternativeName>
        <fullName evidence="1">Hydroxymethylpyrimidine phosphate synthase</fullName>
        <shortName evidence="1">HMP-P synthase</shortName>
        <shortName evidence="1">HMP-phosphate synthase</shortName>
        <shortName evidence="1">HMPP synthase</shortName>
    </alternativeName>
    <alternativeName>
        <fullName evidence="1">Thiamine biosynthesis protein ThiC</fullName>
    </alternativeName>
</protein>
<gene>
    <name evidence="1" type="primary">thiC</name>
    <name type="ordered locus">Tpet_0141</name>
</gene>
<feature type="chain" id="PRO_1000004812" description="Phosphomethylpyrimidine synthase">
    <location>
        <begin position="1"/>
        <end position="424"/>
    </location>
</feature>
<feature type="binding site" evidence="1">
    <location>
        <position position="66"/>
    </location>
    <ligand>
        <name>substrate</name>
    </ligand>
</feature>
<feature type="binding site" evidence="1">
    <location>
        <position position="95"/>
    </location>
    <ligand>
        <name>substrate</name>
    </ligand>
</feature>
<feature type="binding site" evidence="1">
    <location>
        <position position="124"/>
    </location>
    <ligand>
        <name>substrate</name>
    </ligand>
</feature>
<feature type="binding site" evidence="1">
    <location>
        <position position="163"/>
    </location>
    <ligand>
        <name>substrate</name>
    </ligand>
</feature>
<feature type="binding site" evidence="1">
    <location>
        <begin position="185"/>
        <end position="187"/>
    </location>
    <ligand>
        <name>substrate</name>
    </ligand>
</feature>
<feature type="binding site" evidence="1">
    <location>
        <begin position="226"/>
        <end position="229"/>
    </location>
    <ligand>
        <name>substrate</name>
    </ligand>
</feature>
<feature type="binding site" evidence="1">
    <location>
        <position position="265"/>
    </location>
    <ligand>
        <name>substrate</name>
    </ligand>
</feature>
<feature type="binding site" evidence="1">
    <location>
        <position position="269"/>
    </location>
    <ligand>
        <name>Zn(2+)</name>
        <dbReference type="ChEBI" id="CHEBI:29105"/>
    </ligand>
</feature>
<feature type="binding site" evidence="1">
    <location>
        <position position="292"/>
    </location>
    <ligand>
        <name>substrate</name>
    </ligand>
</feature>
<feature type="binding site" evidence="1">
    <location>
        <position position="333"/>
    </location>
    <ligand>
        <name>Zn(2+)</name>
        <dbReference type="ChEBI" id="CHEBI:29105"/>
    </ligand>
</feature>
<feature type="binding site" evidence="1">
    <location>
        <position position="408"/>
    </location>
    <ligand>
        <name>[4Fe-4S] cluster</name>
        <dbReference type="ChEBI" id="CHEBI:49883"/>
        <note>4Fe-4S-S-AdoMet</note>
    </ligand>
</feature>
<feature type="binding site" evidence="1">
    <location>
        <position position="411"/>
    </location>
    <ligand>
        <name>[4Fe-4S] cluster</name>
        <dbReference type="ChEBI" id="CHEBI:49883"/>
        <note>4Fe-4S-S-AdoMet</note>
    </ligand>
</feature>
<feature type="binding site" evidence="1">
    <location>
        <position position="415"/>
    </location>
    <ligand>
        <name>[4Fe-4S] cluster</name>
        <dbReference type="ChEBI" id="CHEBI:49883"/>
        <note>4Fe-4S-S-AdoMet</note>
    </ligand>
</feature>
<dbReference type="EC" id="4.1.99.17" evidence="1"/>
<dbReference type="EMBL" id="CP000702">
    <property type="protein sequence ID" value="ABQ46170.1"/>
    <property type="molecule type" value="Genomic_DNA"/>
</dbReference>
<dbReference type="RefSeq" id="WP_004080892.1">
    <property type="nucleotide sequence ID" value="NC_009486.1"/>
</dbReference>
<dbReference type="SMR" id="A5IIZ7"/>
<dbReference type="STRING" id="390874.Tpet_0141"/>
<dbReference type="KEGG" id="tpt:Tpet_0141"/>
<dbReference type="eggNOG" id="COG0422">
    <property type="taxonomic scope" value="Bacteria"/>
</dbReference>
<dbReference type="HOGENOM" id="CLU_013181_2_2_0"/>
<dbReference type="UniPathway" id="UPA00060"/>
<dbReference type="Proteomes" id="UP000006558">
    <property type="component" value="Chromosome"/>
</dbReference>
<dbReference type="GO" id="GO:0005829">
    <property type="term" value="C:cytosol"/>
    <property type="evidence" value="ECO:0007669"/>
    <property type="project" value="TreeGrafter"/>
</dbReference>
<dbReference type="GO" id="GO:0051539">
    <property type="term" value="F:4 iron, 4 sulfur cluster binding"/>
    <property type="evidence" value="ECO:0007669"/>
    <property type="project" value="UniProtKB-KW"/>
</dbReference>
<dbReference type="GO" id="GO:0016830">
    <property type="term" value="F:carbon-carbon lyase activity"/>
    <property type="evidence" value="ECO:0007669"/>
    <property type="project" value="InterPro"/>
</dbReference>
<dbReference type="GO" id="GO:0008270">
    <property type="term" value="F:zinc ion binding"/>
    <property type="evidence" value="ECO:0007669"/>
    <property type="project" value="UniProtKB-UniRule"/>
</dbReference>
<dbReference type="GO" id="GO:0009228">
    <property type="term" value="P:thiamine biosynthetic process"/>
    <property type="evidence" value="ECO:0007669"/>
    <property type="project" value="UniProtKB-KW"/>
</dbReference>
<dbReference type="GO" id="GO:0009229">
    <property type="term" value="P:thiamine diphosphate biosynthetic process"/>
    <property type="evidence" value="ECO:0007669"/>
    <property type="project" value="UniProtKB-UniRule"/>
</dbReference>
<dbReference type="FunFam" id="3.20.20.540:FF:000002">
    <property type="entry name" value="Phosphomethylpyrimidine synthase"/>
    <property type="match status" value="1"/>
</dbReference>
<dbReference type="Gene3D" id="3.20.20.540">
    <property type="entry name" value="Radical SAM ThiC family, central domain"/>
    <property type="match status" value="1"/>
</dbReference>
<dbReference type="HAMAP" id="MF_00089">
    <property type="entry name" value="ThiC"/>
    <property type="match status" value="1"/>
</dbReference>
<dbReference type="InterPro" id="IPR037509">
    <property type="entry name" value="ThiC"/>
</dbReference>
<dbReference type="InterPro" id="IPR038521">
    <property type="entry name" value="ThiC/Bza_core_dom"/>
</dbReference>
<dbReference type="InterPro" id="IPR002817">
    <property type="entry name" value="ThiC/BzaA/B"/>
</dbReference>
<dbReference type="NCBIfam" id="NF009895">
    <property type="entry name" value="PRK13352.1"/>
    <property type="match status" value="1"/>
</dbReference>
<dbReference type="NCBIfam" id="TIGR00190">
    <property type="entry name" value="thiC"/>
    <property type="match status" value="1"/>
</dbReference>
<dbReference type="PANTHER" id="PTHR30557:SF1">
    <property type="entry name" value="PHOSPHOMETHYLPYRIMIDINE SYNTHASE, CHLOROPLASTIC"/>
    <property type="match status" value="1"/>
</dbReference>
<dbReference type="PANTHER" id="PTHR30557">
    <property type="entry name" value="THIAMINE BIOSYNTHESIS PROTEIN THIC"/>
    <property type="match status" value="1"/>
</dbReference>
<dbReference type="Pfam" id="PF01964">
    <property type="entry name" value="ThiC_Rad_SAM"/>
    <property type="match status" value="1"/>
</dbReference>
<dbReference type="SFLD" id="SFLDF00407">
    <property type="entry name" value="phosphomethylpyrimidine_syntha"/>
    <property type="match status" value="1"/>
</dbReference>
<dbReference type="SFLD" id="SFLDG01114">
    <property type="entry name" value="phosphomethylpyrimidine_syntha"/>
    <property type="match status" value="1"/>
</dbReference>
<dbReference type="SFLD" id="SFLDS00113">
    <property type="entry name" value="Radical_SAM_Phosphomethylpyrim"/>
    <property type="match status" value="1"/>
</dbReference>
<organism>
    <name type="scientific">Thermotoga petrophila (strain ATCC BAA-488 / DSM 13995 / JCM 10881 / RKU-1)</name>
    <dbReference type="NCBI Taxonomy" id="390874"/>
    <lineage>
        <taxon>Bacteria</taxon>
        <taxon>Thermotogati</taxon>
        <taxon>Thermotogota</taxon>
        <taxon>Thermotogae</taxon>
        <taxon>Thermotogales</taxon>
        <taxon>Thermotogaceae</taxon>
        <taxon>Thermotoga</taxon>
    </lineage>
</organism>
<evidence type="ECO:0000255" key="1">
    <source>
        <dbReference type="HAMAP-Rule" id="MF_00089"/>
    </source>
</evidence>
<keyword id="KW-0004">4Fe-4S</keyword>
<keyword id="KW-0408">Iron</keyword>
<keyword id="KW-0411">Iron-sulfur</keyword>
<keyword id="KW-0456">Lyase</keyword>
<keyword id="KW-0479">Metal-binding</keyword>
<keyword id="KW-0949">S-adenosyl-L-methionine</keyword>
<keyword id="KW-0784">Thiamine biosynthesis</keyword>
<keyword id="KW-0862">Zinc</keyword>
<sequence>MTQMEMARKGVVSDEMKKVAEYEGVDVEIVRQKLAEGRAVLPKNKLHRIERPMIVGEGFSVKVNANIGTSQGFSSLEEEKEKARVAIEYGADSLMVLSTWGDLREIRRAIVEMSPVPVGSVPIYDSAVRSYQMKKNVVDFSEKDFFDMVIAHAEDGIDFMTIHVGVTRRVLDRIKSSRRVLKIVSRGGAIIAGWMIKNNKENPFYEHFDELLDIAKDYDITLSLGDGMRPGAVVDASDAQQFEELFVMGELVERAREKGVQVMLEGPGHVPLNEVEMNVRLMKKIGKGAPIFLLGPLPTDRAMGYDHIACAIGGALAGYYGADFLCYVTPSEHISLPDVEDVREGVIASKIAAIVADVARGNKKAWELEKKMALARKNFDWETMFSLSLGKDVAKKKYEERPYPDKGCSMCGPFCAIKIAEEFS</sequence>
<name>THIC_THEP1</name>
<proteinExistence type="inferred from homology"/>
<reference key="1">
    <citation type="submission" date="2007-05" db="EMBL/GenBank/DDBJ databases">
        <title>Complete sequence of Thermotoga petrophila RKU-1.</title>
        <authorList>
            <consortium name="US DOE Joint Genome Institute"/>
            <person name="Copeland A."/>
            <person name="Lucas S."/>
            <person name="Lapidus A."/>
            <person name="Barry K."/>
            <person name="Glavina del Rio T."/>
            <person name="Dalin E."/>
            <person name="Tice H."/>
            <person name="Pitluck S."/>
            <person name="Sims D."/>
            <person name="Brettin T."/>
            <person name="Bruce D."/>
            <person name="Detter J.C."/>
            <person name="Han C."/>
            <person name="Tapia R."/>
            <person name="Schmutz J."/>
            <person name="Larimer F."/>
            <person name="Land M."/>
            <person name="Hauser L."/>
            <person name="Kyrpides N."/>
            <person name="Mikhailova N."/>
            <person name="Nelson K."/>
            <person name="Gogarten J.P."/>
            <person name="Noll K."/>
            <person name="Richardson P."/>
        </authorList>
    </citation>
    <scope>NUCLEOTIDE SEQUENCE [LARGE SCALE GENOMIC DNA]</scope>
    <source>
        <strain>ATCC BAA-488 / DSM 13995 / JCM 10881 / RKU-1</strain>
    </source>
</reference>
<comment type="function">
    <text evidence="1">Catalyzes the synthesis of the hydroxymethylpyrimidine phosphate (HMP-P) moiety of thiamine from aminoimidazole ribotide (AIR) in a radical S-adenosyl-L-methionine (SAM)-dependent reaction.</text>
</comment>
<comment type="catalytic activity">
    <reaction evidence="1">
        <text>5-amino-1-(5-phospho-beta-D-ribosyl)imidazole + S-adenosyl-L-methionine = 4-amino-2-methyl-5-(phosphooxymethyl)pyrimidine + CO + 5'-deoxyadenosine + formate + L-methionine + 3 H(+)</text>
        <dbReference type="Rhea" id="RHEA:24840"/>
        <dbReference type="ChEBI" id="CHEBI:15378"/>
        <dbReference type="ChEBI" id="CHEBI:15740"/>
        <dbReference type="ChEBI" id="CHEBI:17245"/>
        <dbReference type="ChEBI" id="CHEBI:17319"/>
        <dbReference type="ChEBI" id="CHEBI:57844"/>
        <dbReference type="ChEBI" id="CHEBI:58354"/>
        <dbReference type="ChEBI" id="CHEBI:59789"/>
        <dbReference type="ChEBI" id="CHEBI:137981"/>
        <dbReference type="EC" id="4.1.99.17"/>
    </reaction>
</comment>
<comment type="cofactor">
    <cofactor evidence="1">
        <name>[4Fe-4S] cluster</name>
        <dbReference type="ChEBI" id="CHEBI:49883"/>
    </cofactor>
    <text evidence="1">Binds 1 [4Fe-4S] cluster per subunit. The cluster is coordinated with 3 cysteines and an exchangeable S-adenosyl-L-methionine.</text>
</comment>
<comment type="pathway">
    <text evidence="1">Cofactor biosynthesis; thiamine diphosphate biosynthesis.</text>
</comment>
<comment type="similarity">
    <text evidence="1">Belongs to the ThiC family.</text>
</comment>
<accession>A5IIZ7</accession>